<keyword id="KW-0153">Cholesterol metabolism</keyword>
<keyword id="KW-0325">Glycoprotein</keyword>
<keyword id="KW-0345">HDL</keyword>
<keyword id="KW-0443">Lipid metabolism</keyword>
<keyword id="KW-0445">Lipid transport</keyword>
<keyword id="KW-0449">Lipoprotein</keyword>
<keyword id="KW-0558">Oxidation</keyword>
<keyword id="KW-0564">Palmitate</keyword>
<keyword id="KW-0597">Phosphoprotein</keyword>
<keyword id="KW-1185">Reference proteome</keyword>
<keyword id="KW-0677">Repeat</keyword>
<keyword id="KW-0964">Secreted</keyword>
<keyword id="KW-0732">Signal</keyword>
<keyword id="KW-0753">Steroid metabolism</keyword>
<keyword id="KW-1207">Sterol metabolism</keyword>
<keyword id="KW-0813">Transport</keyword>
<proteinExistence type="evidence at protein level"/>
<name>APOA1_PANTR</name>
<reference key="1">
    <citation type="journal article" date="2009" name="Comp. Biochem. Physiol.">
        <title>Mass spectral analyses of the two major apolipoproteins of great ape high density lipoproteins.</title>
        <authorList>
            <person name="Puppione D.L."/>
            <person name="Della Donna L."/>
            <person name="Laganowsky A.D."/>
            <person name="Bassilian S."/>
            <person name="Souda P."/>
            <person name="Ryder O.A."/>
            <person name="Whitelegge J.P."/>
        </authorList>
    </citation>
    <scope>IDENTIFICATION BY MASS SPECTROMETRY</scope>
</reference>
<feature type="signal peptide" evidence="5">
    <location>
        <begin position="1"/>
        <end position="18"/>
    </location>
</feature>
<feature type="chain" id="PRO_0000425330" description="Proapolipoprotein A-I">
    <location>
        <begin position="19"/>
        <end position="267"/>
    </location>
</feature>
<feature type="chain" id="PRO_0000416563" description="Apolipoprotein A-I">
    <location>
        <begin position="25"/>
        <end position="267"/>
    </location>
</feature>
<feature type="chain" id="PRO_0000416564" description="Truncated apolipoprotein A-I">
    <location>
        <begin position="25"/>
        <end position="266"/>
    </location>
</feature>
<feature type="repeat" description="1">
    <location>
        <begin position="68"/>
        <end position="89"/>
    </location>
</feature>
<feature type="repeat" description="2">
    <location>
        <begin position="90"/>
        <end position="111"/>
    </location>
</feature>
<feature type="repeat" description="3; half-length">
    <location>
        <begin position="112"/>
        <end position="122"/>
    </location>
</feature>
<feature type="repeat" description="4">
    <location>
        <begin position="123"/>
        <end position="144"/>
    </location>
</feature>
<feature type="repeat" description="5">
    <location>
        <begin position="145"/>
        <end position="166"/>
    </location>
</feature>
<feature type="repeat" description="6">
    <location>
        <begin position="167"/>
        <end position="188"/>
    </location>
</feature>
<feature type="repeat" description="7">
    <location>
        <begin position="189"/>
        <end position="210"/>
    </location>
</feature>
<feature type="repeat" description="8">
    <location>
        <begin position="211"/>
        <end position="232"/>
    </location>
</feature>
<feature type="repeat" description="9; half-length">
    <location>
        <begin position="233"/>
        <end position="243"/>
    </location>
</feature>
<feature type="repeat" description="10">
    <location>
        <begin position="244"/>
        <end position="267"/>
    </location>
</feature>
<feature type="region of interest" description="10 X approximate tandem repeats">
    <location>
        <begin position="68"/>
        <end position="267"/>
    </location>
</feature>
<feature type="modified residue" description="Methionine sulfoxide" evidence="1">
    <location>
        <position position="110"/>
    </location>
</feature>
<feature type="modified residue" description="Methionine sulfoxide" evidence="1">
    <location>
        <position position="136"/>
    </location>
</feature>
<gene>
    <name type="primary">APOA1</name>
</gene>
<accession>P0DJG0</accession>
<protein>
    <recommendedName>
        <fullName>Apolipoprotein A-I</fullName>
        <shortName>Apo-AI</shortName>
        <shortName>ApoA-I</shortName>
    </recommendedName>
    <alternativeName>
        <fullName>Apolipoprotein A1</fullName>
    </alternativeName>
    <component>
        <recommendedName>
            <fullName>Proapolipoprotein A-I</fullName>
            <shortName>ProapoA-I</shortName>
        </recommendedName>
    </component>
    <component>
        <recommendedName>
            <fullName>Truncated apolipoprotein A-I</fullName>
        </recommendedName>
    </component>
</protein>
<evidence type="ECO:0000250" key="1"/>
<evidence type="ECO:0000250" key="2">
    <source>
        <dbReference type="UniProtKB" id="G5BQH5"/>
    </source>
</evidence>
<evidence type="ECO:0000250" key="3">
    <source>
        <dbReference type="UniProtKB" id="P02647"/>
    </source>
</evidence>
<evidence type="ECO:0000250" key="4">
    <source>
        <dbReference type="UniProtKB" id="P04639"/>
    </source>
</evidence>
<evidence type="ECO:0000255" key="5"/>
<evidence type="ECO:0000269" key="6">
    <source>
    </source>
</evidence>
<evidence type="ECO:0000305" key="7"/>
<sequence>MKAAVLTLAVLFLTGSQARHFWQQDEPPQSPWDRVKDLATVYVDVLKDSGRDYVSQFEGSALGKQLNLKLLDNWDSVTSTFSKLREQLGPVTQEFWDNLEKETEGLRQEMSKDLEEVKAKVQPYLDDFQKKWQEEMELYRQKVEPLRAELQEGARQKLHELQEKLSPLGEEMRDRARAHVDALRTHLAPYSDELRQRLAARLEALKENGGARLAEYHAKATEHLSTLSEKAKPALEDLRQGLLPVLESFKVSFLSALEEYTKKLNTQ</sequence>
<dbReference type="RefSeq" id="XP_001153383.1">
    <property type="nucleotide sequence ID" value="XM_001153383.4"/>
</dbReference>
<dbReference type="RefSeq" id="XP_001153517.1">
    <property type="nucleotide sequence ID" value="XM_001153517.4"/>
</dbReference>
<dbReference type="RefSeq" id="XP_016777528.1">
    <property type="nucleotide sequence ID" value="XM_016922039.1"/>
</dbReference>
<dbReference type="RefSeq" id="XP_016777529.1">
    <property type="nucleotide sequence ID" value="XM_016922040.1"/>
</dbReference>
<dbReference type="RefSeq" id="XP_016777530.1">
    <property type="nucleotide sequence ID" value="XM_016922041.1"/>
</dbReference>
<dbReference type="RefSeq" id="XP_054518702.1">
    <property type="nucleotide sequence ID" value="XM_054662727.2"/>
</dbReference>
<dbReference type="RefSeq" id="XP_508770.1">
    <property type="nucleotide sequence ID" value="XM_508770.5"/>
</dbReference>
<dbReference type="BMRB" id="P0DJG0"/>
<dbReference type="SMR" id="P0DJG0"/>
<dbReference type="FunCoup" id="P0DJG0">
    <property type="interactions" value="145"/>
</dbReference>
<dbReference type="STRING" id="9598.ENSPTRP00000007404"/>
<dbReference type="PaxDb" id="9598-ENSPTRP00000007404"/>
<dbReference type="Ensembl" id="ENSPTRT00000008023.3">
    <property type="protein sequence ID" value="ENSPTRP00000007404.2"/>
    <property type="gene ID" value="ENSPTRG00000004316.6"/>
</dbReference>
<dbReference type="Ensembl" id="ENSPTRT00000095290.1">
    <property type="protein sequence ID" value="ENSPTRP00000080550.1"/>
    <property type="gene ID" value="ENSPTRG00000046016.1"/>
</dbReference>
<dbReference type="GeneID" id="107967226"/>
<dbReference type="VGNC" id="VGNC:10228">
    <property type="gene designation" value="APOA1"/>
</dbReference>
<dbReference type="eggNOG" id="ENOG502S1XQ">
    <property type="taxonomic scope" value="Eukaryota"/>
</dbReference>
<dbReference type="GeneTree" id="ENSGT00950000182929"/>
<dbReference type="HOGENOM" id="CLU_058447_1_0_1"/>
<dbReference type="InParanoid" id="P0DJG0"/>
<dbReference type="OMA" id="AKASCHY"/>
<dbReference type="TreeFam" id="TF334458"/>
<dbReference type="Proteomes" id="UP000002277">
    <property type="component" value="Chromosome 11"/>
</dbReference>
<dbReference type="Bgee" id="ENSPTRG00000004316">
    <property type="expression patterns" value="Expressed in liver and 11 other cell types or tissues"/>
</dbReference>
<dbReference type="GO" id="GO:0042627">
    <property type="term" value="C:chylomicron"/>
    <property type="evidence" value="ECO:0000318"/>
    <property type="project" value="GO_Central"/>
</dbReference>
<dbReference type="GO" id="GO:1903561">
    <property type="term" value="C:extracellular vesicle"/>
    <property type="evidence" value="ECO:0000318"/>
    <property type="project" value="GO_Central"/>
</dbReference>
<dbReference type="GO" id="GO:0034364">
    <property type="term" value="C:high-density lipoprotein particle"/>
    <property type="evidence" value="ECO:0000318"/>
    <property type="project" value="GO_Central"/>
</dbReference>
<dbReference type="GO" id="GO:0034362">
    <property type="term" value="C:low-density lipoprotein particle"/>
    <property type="evidence" value="ECO:0000318"/>
    <property type="project" value="GO_Central"/>
</dbReference>
<dbReference type="GO" id="GO:0034361">
    <property type="term" value="C:very-low-density lipoprotein particle"/>
    <property type="evidence" value="ECO:0000318"/>
    <property type="project" value="GO_Central"/>
</dbReference>
<dbReference type="GO" id="GO:0120020">
    <property type="term" value="F:cholesterol transfer activity"/>
    <property type="evidence" value="ECO:0000318"/>
    <property type="project" value="GO_Central"/>
</dbReference>
<dbReference type="GO" id="GO:0060228">
    <property type="term" value="F:phosphatidylcholine-sterol O-acyltransferase activator activity"/>
    <property type="evidence" value="ECO:0000318"/>
    <property type="project" value="GO_Central"/>
</dbReference>
<dbReference type="GO" id="GO:0005543">
    <property type="term" value="F:phospholipid binding"/>
    <property type="evidence" value="ECO:0000318"/>
    <property type="project" value="GO_Central"/>
</dbReference>
<dbReference type="GO" id="GO:0042803">
    <property type="term" value="F:protein homodimerization activity"/>
    <property type="evidence" value="ECO:0000250"/>
    <property type="project" value="UniProtKB"/>
</dbReference>
<dbReference type="GO" id="GO:0055090">
    <property type="term" value="P:acylglycerol homeostasis"/>
    <property type="evidence" value="ECO:0000318"/>
    <property type="project" value="GO_Central"/>
</dbReference>
<dbReference type="GO" id="GO:0033344">
    <property type="term" value="P:cholesterol efflux"/>
    <property type="evidence" value="ECO:0000318"/>
    <property type="project" value="GO_Central"/>
</dbReference>
<dbReference type="GO" id="GO:0008203">
    <property type="term" value="P:cholesterol metabolic process"/>
    <property type="evidence" value="ECO:0000318"/>
    <property type="project" value="GO_Central"/>
</dbReference>
<dbReference type="GO" id="GO:0042157">
    <property type="term" value="P:lipoprotein metabolic process"/>
    <property type="evidence" value="ECO:0007669"/>
    <property type="project" value="InterPro"/>
</dbReference>
<dbReference type="GO" id="GO:0033700">
    <property type="term" value="P:phospholipid efflux"/>
    <property type="evidence" value="ECO:0000318"/>
    <property type="project" value="GO_Central"/>
</dbReference>
<dbReference type="GO" id="GO:0010875">
    <property type="term" value="P:positive regulation of cholesterol efflux"/>
    <property type="evidence" value="ECO:0000250"/>
    <property type="project" value="UniProtKB"/>
</dbReference>
<dbReference type="GO" id="GO:0050766">
    <property type="term" value="P:positive regulation of phagocytosis"/>
    <property type="evidence" value="ECO:0000250"/>
    <property type="project" value="UniProtKB"/>
</dbReference>
<dbReference type="GO" id="GO:1902995">
    <property type="term" value="P:positive regulation of phospholipid efflux"/>
    <property type="evidence" value="ECO:0000250"/>
    <property type="project" value="UniProtKB"/>
</dbReference>
<dbReference type="GO" id="GO:0050821">
    <property type="term" value="P:protein stabilization"/>
    <property type="evidence" value="ECO:0000250"/>
    <property type="project" value="UniProtKB"/>
</dbReference>
<dbReference type="FunFam" id="1.20.120.20:FF:000001">
    <property type="entry name" value="Apolipoprotein A-I"/>
    <property type="match status" value="1"/>
</dbReference>
<dbReference type="FunFam" id="1.20.5.20:FF:000001">
    <property type="entry name" value="apolipoprotein A-I"/>
    <property type="match status" value="1"/>
</dbReference>
<dbReference type="Gene3D" id="1.20.5.20">
    <property type="match status" value="1"/>
</dbReference>
<dbReference type="Gene3D" id="6.10.140.380">
    <property type="match status" value="1"/>
</dbReference>
<dbReference type="Gene3D" id="1.20.120.20">
    <property type="entry name" value="Apolipoprotein"/>
    <property type="match status" value="1"/>
</dbReference>
<dbReference type="InterPro" id="IPR000074">
    <property type="entry name" value="ApoA_E"/>
</dbReference>
<dbReference type="InterPro" id="IPR050163">
    <property type="entry name" value="Apolipoprotein_A1/A4/E"/>
</dbReference>
<dbReference type="PANTHER" id="PTHR18976">
    <property type="entry name" value="APOLIPOPROTEIN"/>
    <property type="match status" value="1"/>
</dbReference>
<dbReference type="PANTHER" id="PTHR18976:SF11">
    <property type="entry name" value="APOLIPOPROTEIN A-I"/>
    <property type="match status" value="1"/>
</dbReference>
<dbReference type="Pfam" id="PF01442">
    <property type="entry name" value="Apolipoprotein"/>
    <property type="match status" value="1"/>
</dbReference>
<dbReference type="SUPFAM" id="SSF58113">
    <property type="entry name" value="Apolipoprotein A-I"/>
    <property type="match status" value="1"/>
</dbReference>
<comment type="function">
    <text evidence="1">Participates in the reverse transport of cholesterol from tissues to the liver for excretion by promoting cholesterol efflux from tissues and by acting as a cofactor for the lecithin cholesterol acyltransferase (LCAT). As part of the SPAP complex, activates spermatozoa motility (By similarity).</text>
</comment>
<comment type="subunit">
    <text evidence="2 3 4">Homodimer (By similarity). Interacts with APOA1BP and CLU. Component of a sperm activating protein complex (SPAP), consisting of APOA1, an immunoglobulin heavy chain, an immunoglobulin light chain and albumin. Interacts with NDRG1. Interacts with SCGB3A2 (By similarity). Interacts with NAXE and YJEFN3 (By similarity).</text>
</comment>
<comment type="subcellular location">
    <subcellularLocation>
        <location>Secreted</location>
    </subcellularLocation>
</comment>
<comment type="tissue specificity">
    <text>Major protein of plasma HDL, also found in chylomicrons.</text>
</comment>
<comment type="PTM">
    <text evidence="1">Glycosylated.</text>
</comment>
<comment type="PTM">
    <text evidence="1">Palmitoylated.</text>
</comment>
<comment type="PTM">
    <text evidence="1">Phosphorylation sites are present in the extracellular medium.</text>
</comment>
<comment type="mass spectrometry">
    <molecule>Apolipoprotein A-I</molecule>
</comment>
<comment type="mass spectrometry">
    <molecule>Truncated apolipoprotein A-I</molecule>
</comment>
<comment type="similarity">
    <text evidence="7">Belongs to the apolipoprotein A1/A4/E family.</text>
</comment>
<organism>
    <name type="scientific">Pan troglodytes</name>
    <name type="common">Chimpanzee</name>
    <dbReference type="NCBI Taxonomy" id="9598"/>
    <lineage>
        <taxon>Eukaryota</taxon>
        <taxon>Metazoa</taxon>
        <taxon>Chordata</taxon>
        <taxon>Craniata</taxon>
        <taxon>Vertebrata</taxon>
        <taxon>Euteleostomi</taxon>
        <taxon>Mammalia</taxon>
        <taxon>Eutheria</taxon>
        <taxon>Euarchontoglires</taxon>
        <taxon>Primates</taxon>
        <taxon>Haplorrhini</taxon>
        <taxon>Catarrhini</taxon>
        <taxon>Hominidae</taxon>
        <taxon>Pan</taxon>
    </lineage>
</organism>